<evidence type="ECO:0000255" key="1">
    <source>
        <dbReference type="HAMAP-Rule" id="MF_01959"/>
    </source>
</evidence>
<proteinExistence type="inferred from homology"/>
<keyword id="KW-0997">Cell inner membrane</keyword>
<keyword id="KW-1003">Cell membrane</keyword>
<keyword id="KW-0201">Cytochrome c-type biogenesis</keyword>
<keyword id="KW-0349">Heme</keyword>
<keyword id="KW-0408">Iron</keyword>
<keyword id="KW-0472">Membrane</keyword>
<keyword id="KW-0479">Metal-binding</keyword>
<keyword id="KW-1185">Reference proteome</keyword>
<keyword id="KW-0735">Signal-anchor</keyword>
<keyword id="KW-0812">Transmembrane</keyword>
<keyword id="KW-1133">Transmembrane helix</keyword>
<protein>
    <recommendedName>
        <fullName evidence="1">Cytochrome c-type biogenesis protein CcmE</fullName>
    </recommendedName>
    <alternativeName>
        <fullName evidence="1">Cytochrome c maturation protein E</fullName>
    </alternativeName>
    <alternativeName>
        <fullName evidence="1">Heme chaperone CcmE</fullName>
    </alternativeName>
</protein>
<comment type="function">
    <text evidence="1">Heme chaperone required for the biogenesis of c-type cytochromes. Transiently binds heme delivered by CcmC and transfers the heme to apo-cytochromes in a process facilitated by CcmF and CcmH.</text>
</comment>
<comment type="subcellular location">
    <subcellularLocation>
        <location evidence="1">Cell inner membrane</location>
        <topology evidence="1">Single-pass type II membrane protein</topology>
        <orientation evidence="1">Periplasmic side</orientation>
    </subcellularLocation>
</comment>
<comment type="similarity">
    <text evidence="1">Belongs to the CcmE/CycJ family.</text>
</comment>
<feature type="chain" id="PRO_0000238872" description="Cytochrome c-type biogenesis protein CcmE">
    <location>
        <begin position="1"/>
        <end position="160"/>
    </location>
</feature>
<feature type="topological domain" description="Cytoplasmic" evidence="1">
    <location>
        <begin position="1"/>
        <end position="8"/>
    </location>
</feature>
<feature type="transmembrane region" description="Helical; Signal-anchor for type II membrane protein" evidence="1">
    <location>
        <begin position="9"/>
        <end position="29"/>
    </location>
</feature>
<feature type="topological domain" description="Periplasmic" evidence="1">
    <location>
        <begin position="30"/>
        <end position="160"/>
    </location>
</feature>
<feature type="binding site" description="covalent" evidence="1">
    <location>
        <position position="128"/>
    </location>
    <ligand>
        <name>heme</name>
        <dbReference type="ChEBI" id="CHEBI:30413"/>
    </ligand>
</feature>
<feature type="binding site" description="axial binding residue" evidence="1">
    <location>
        <position position="132"/>
    </location>
    <ligand>
        <name>heme</name>
        <dbReference type="ChEBI" id="CHEBI:30413"/>
    </ligand>
    <ligandPart>
        <name>Fe</name>
        <dbReference type="ChEBI" id="CHEBI:18248"/>
    </ligandPart>
</feature>
<name>CCME_VIBCH</name>
<dbReference type="EMBL" id="AE003852">
    <property type="protein sequence ID" value="AAF95199.1"/>
    <property type="molecule type" value="Genomic_DNA"/>
</dbReference>
<dbReference type="PIR" id="G82124">
    <property type="entry name" value="G82124"/>
</dbReference>
<dbReference type="RefSeq" id="NP_231685.1">
    <property type="nucleotide sequence ID" value="NC_002505.1"/>
</dbReference>
<dbReference type="RefSeq" id="WP_001069622.1">
    <property type="nucleotide sequence ID" value="NZ_LT906614.1"/>
</dbReference>
<dbReference type="SMR" id="Q9KQE7"/>
<dbReference type="STRING" id="243277.VC_2053"/>
<dbReference type="DNASU" id="2613433"/>
<dbReference type="EnsemblBacteria" id="AAF95199">
    <property type="protein sequence ID" value="AAF95199"/>
    <property type="gene ID" value="VC_2053"/>
</dbReference>
<dbReference type="GeneID" id="89513959"/>
<dbReference type="KEGG" id="vch:VC_2053"/>
<dbReference type="PATRIC" id="fig|243277.26.peg.1962"/>
<dbReference type="eggNOG" id="COG2332">
    <property type="taxonomic scope" value="Bacteria"/>
</dbReference>
<dbReference type="HOGENOM" id="CLU_079503_1_0_6"/>
<dbReference type="Proteomes" id="UP000000584">
    <property type="component" value="Chromosome 1"/>
</dbReference>
<dbReference type="GO" id="GO:0005886">
    <property type="term" value="C:plasma membrane"/>
    <property type="evidence" value="ECO:0007669"/>
    <property type="project" value="UniProtKB-SubCell"/>
</dbReference>
<dbReference type="GO" id="GO:0020037">
    <property type="term" value="F:heme binding"/>
    <property type="evidence" value="ECO:0007669"/>
    <property type="project" value="InterPro"/>
</dbReference>
<dbReference type="GO" id="GO:0046872">
    <property type="term" value="F:metal ion binding"/>
    <property type="evidence" value="ECO:0007669"/>
    <property type="project" value="UniProtKB-KW"/>
</dbReference>
<dbReference type="GO" id="GO:0017004">
    <property type="term" value="P:cytochrome complex assembly"/>
    <property type="evidence" value="ECO:0007669"/>
    <property type="project" value="UniProtKB-KW"/>
</dbReference>
<dbReference type="FunFam" id="2.40.50.140:FF:000104">
    <property type="entry name" value="Cytochrome c-type biogenesis protein CcmE"/>
    <property type="match status" value="1"/>
</dbReference>
<dbReference type="Gene3D" id="2.40.50.140">
    <property type="entry name" value="Nucleic acid-binding proteins"/>
    <property type="match status" value="1"/>
</dbReference>
<dbReference type="HAMAP" id="MF_01959">
    <property type="entry name" value="CcmE"/>
    <property type="match status" value="1"/>
</dbReference>
<dbReference type="InterPro" id="IPR004329">
    <property type="entry name" value="CcmE"/>
</dbReference>
<dbReference type="InterPro" id="IPR036127">
    <property type="entry name" value="CcmE-like_sf"/>
</dbReference>
<dbReference type="InterPro" id="IPR012340">
    <property type="entry name" value="NA-bd_OB-fold"/>
</dbReference>
<dbReference type="NCBIfam" id="NF009638">
    <property type="entry name" value="PRK13165.1"/>
    <property type="match status" value="1"/>
</dbReference>
<dbReference type="NCBIfam" id="NF009727">
    <property type="entry name" value="PRK13254.1-1"/>
    <property type="match status" value="1"/>
</dbReference>
<dbReference type="NCBIfam" id="NF009729">
    <property type="entry name" value="PRK13254.1-3"/>
    <property type="match status" value="1"/>
</dbReference>
<dbReference type="PANTHER" id="PTHR34128">
    <property type="entry name" value="CYTOCHROME C-TYPE BIOGENESIS PROTEIN CCME HOMOLOG, MITOCHONDRIAL"/>
    <property type="match status" value="1"/>
</dbReference>
<dbReference type="PANTHER" id="PTHR34128:SF2">
    <property type="entry name" value="CYTOCHROME C-TYPE BIOGENESIS PROTEIN CCME HOMOLOG, MITOCHONDRIAL"/>
    <property type="match status" value="1"/>
</dbReference>
<dbReference type="Pfam" id="PF03100">
    <property type="entry name" value="CcmE"/>
    <property type="match status" value="1"/>
</dbReference>
<dbReference type="SUPFAM" id="SSF82093">
    <property type="entry name" value="Heme chaperone CcmE"/>
    <property type="match status" value="1"/>
</dbReference>
<reference key="1">
    <citation type="journal article" date="2000" name="Nature">
        <title>DNA sequence of both chromosomes of the cholera pathogen Vibrio cholerae.</title>
        <authorList>
            <person name="Heidelberg J.F."/>
            <person name="Eisen J.A."/>
            <person name="Nelson W.C."/>
            <person name="Clayton R.A."/>
            <person name="Gwinn M.L."/>
            <person name="Dodson R.J."/>
            <person name="Haft D.H."/>
            <person name="Hickey E.K."/>
            <person name="Peterson J.D."/>
            <person name="Umayam L.A."/>
            <person name="Gill S.R."/>
            <person name="Nelson K.E."/>
            <person name="Read T.D."/>
            <person name="Tettelin H."/>
            <person name="Richardson D.L."/>
            <person name="Ermolaeva M.D."/>
            <person name="Vamathevan J.J."/>
            <person name="Bass S."/>
            <person name="Qin H."/>
            <person name="Dragoi I."/>
            <person name="Sellers P."/>
            <person name="McDonald L.A."/>
            <person name="Utterback T.R."/>
            <person name="Fleischmann R.D."/>
            <person name="Nierman W.C."/>
            <person name="White O."/>
            <person name="Salzberg S.L."/>
            <person name="Smith H.O."/>
            <person name="Colwell R.R."/>
            <person name="Mekalanos J.J."/>
            <person name="Venter J.C."/>
            <person name="Fraser C.M."/>
        </authorList>
    </citation>
    <scope>NUCLEOTIDE SEQUENCE [LARGE SCALE GENOMIC DNA]</scope>
    <source>
        <strain>ATCC 39315 / El Tor Inaba N16961</strain>
    </source>
</reference>
<accession>Q9KQE7</accession>
<gene>
    <name evidence="1" type="primary">ccmE</name>
    <name evidence="1" type="synonym">cycJ</name>
    <name type="ordered locus">VC_2053</name>
</gene>
<sequence>MNPRRKKRLGVVLAILFGLSATIGLIIYALNQNMDLFYTPTELVYGKEGKKPEIGQRLRIGGMVVEGSVKRDPNSLKVSFDLHDVGPSITVTYDGILPDLFREGQGIVAQGVLVEPTKIEAFEVLAKHDENYMPPEIAEAMKKTHAPLQYSQEQKQGSDQ</sequence>
<organism>
    <name type="scientific">Vibrio cholerae serotype O1 (strain ATCC 39315 / El Tor Inaba N16961)</name>
    <dbReference type="NCBI Taxonomy" id="243277"/>
    <lineage>
        <taxon>Bacteria</taxon>
        <taxon>Pseudomonadati</taxon>
        <taxon>Pseudomonadota</taxon>
        <taxon>Gammaproteobacteria</taxon>
        <taxon>Vibrionales</taxon>
        <taxon>Vibrionaceae</taxon>
        <taxon>Vibrio</taxon>
    </lineage>
</organism>